<comment type="subcellular location">
    <subcellularLocation>
        <location evidence="1">Cytoplasm</location>
        <location evidence="1">Cytoskeleton</location>
        <location evidence="1">Cilium basal body</location>
    </subcellularLocation>
</comment>
<comment type="sequence caution" evidence="3">
    <conflict type="erroneous gene model prediction">
        <sequence resource="EMBL-CDS" id="EDL78466"/>
    </conflict>
</comment>
<comment type="sequence caution" evidence="3">
    <conflict type="erroneous gene model prediction">
        <sequence resource="EMBL-CDS" id="EDL78467"/>
    </conflict>
</comment>
<sequence length="124" mass="13981">MRRQEALVVTAGTASEASRDGEQPRPAGLVCRARVEPGGPQESRQQWKTFLYCEPHKRIKEVLEEELSIKRDECHVKSPTAVALDGIWSIRRNLPVGGMIPGQQSRNCSLPQTKYYSRHGGLRR</sequence>
<dbReference type="EMBL" id="CF113898">
    <property type="status" value="NOT_ANNOTATED_CDS"/>
    <property type="molecule type" value="mRNA"/>
</dbReference>
<dbReference type="EMBL" id="AC097778">
    <property type="status" value="NOT_ANNOTATED_CDS"/>
    <property type="molecule type" value="Genomic_DNA"/>
</dbReference>
<dbReference type="EMBL" id="CH473993">
    <property type="protein sequence ID" value="EDL78466.1"/>
    <property type="status" value="ALT_SEQ"/>
    <property type="molecule type" value="Genomic_DNA"/>
</dbReference>
<dbReference type="EMBL" id="CH473993">
    <property type="protein sequence ID" value="EDL78467.1"/>
    <property type="status" value="ALT_SEQ"/>
    <property type="molecule type" value="Genomic_DNA"/>
</dbReference>
<dbReference type="RefSeq" id="NP_001102759.1">
    <property type="nucleotide sequence ID" value="NM_001109289.1"/>
</dbReference>
<dbReference type="RefSeq" id="XP_008764189.1">
    <property type="nucleotide sequence ID" value="XM_008765967.2"/>
</dbReference>
<dbReference type="RefSeq" id="XP_063122029.1">
    <property type="nucleotide sequence ID" value="XM_063265959.1"/>
</dbReference>
<dbReference type="STRING" id="10116.ENSRNOP00000012217"/>
<dbReference type="PaxDb" id="10116-ENSRNOP00000012217"/>
<dbReference type="GeneID" id="500945"/>
<dbReference type="KEGG" id="rno:500945"/>
<dbReference type="UCSC" id="RGD:1561795">
    <property type="organism name" value="rat"/>
</dbReference>
<dbReference type="AGR" id="RGD:1561795"/>
<dbReference type="CTD" id="500945"/>
<dbReference type="RGD" id="1561795">
    <property type="gene designation" value="C8h11orf97"/>
</dbReference>
<dbReference type="eggNOG" id="ENOG502SAWP">
    <property type="taxonomic scope" value="Eukaryota"/>
</dbReference>
<dbReference type="HOGENOM" id="CLU_2009274_0_0_1"/>
<dbReference type="InParanoid" id="D3ZF18"/>
<dbReference type="OrthoDB" id="6154260at2759"/>
<dbReference type="PRO" id="PR:D3ZF18"/>
<dbReference type="Proteomes" id="UP000002494">
    <property type="component" value="Unplaced"/>
</dbReference>
<dbReference type="Proteomes" id="UP000234681">
    <property type="component" value="Chromosome 8"/>
</dbReference>
<dbReference type="GO" id="GO:0036064">
    <property type="term" value="C:ciliary basal body"/>
    <property type="evidence" value="ECO:0000250"/>
    <property type="project" value="UniProtKB"/>
</dbReference>
<dbReference type="GO" id="GO:0097546">
    <property type="term" value="C:ciliary base"/>
    <property type="evidence" value="ECO:0000266"/>
    <property type="project" value="RGD"/>
</dbReference>
<dbReference type="GO" id="GO:0005737">
    <property type="term" value="C:cytoplasm"/>
    <property type="evidence" value="ECO:0007669"/>
    <property type="project" value="UniProtKB-KW"/>
</dbReference>
<dbReference type="InterPro" id="IPR040429">
    <property type="entry name" value="C11orf97-like"/>
</dbReference>
<dbReference type="PANTHER" id="PTHR38326">
    <property type="entry name" value="CHROMOSOME 11 OPEN READING FRAME 97"/>
    <property type="match status" value="1"/>
</dbReference>
<dbReference type="PANTHER" id="PTHR38326:SF1">
    <property type="entry name" value="CHROMOSOME 11 OPEN READING FRAME 97"/>
    <property type="match status" value="1"/>
</dbReference>
<feature type="chain" id="PRO_0000440045" description="Uncharacterized protein C11orf97 homolog">
    <location>
        <begin position="1"/>
        <end position="124"/>
    </location>
</feature>
<feature type="region of interest" description="Disordered" evidence="2">
    <location>
        <begin position="1"/>
        <end position="26"/>
    </location>
</feature>
<feature type="region of interest" description="Disordered" evidence="2">
    <location>
        <begin position="100"/>
        <end position="124"/>
    </location>
</feature>
<feature type="compositionally biased region" description="Polar residues" evidence="2">
    <location>
        <begin position="102"/>
        <end position="115"/>
    </location>
</feature>
<organism>
    <name type="scientific">Rattus norvegicus</name>
    <name type="common">Rat</name>
    <dbReference type="NCBI Taxonomy" id="10116"/>
    <lineage>
        <taxon>Eukaryota</taxon>
        <taxon>Metazoa</taxon>
        <taxon>Chordata</taxon>
        <taxon>Craniata</taxon>
        <taxon>Vertebrata</taxon>
        <taxon>Euteleostomi</taxon>
        <taxon>Mammalia</taxon>
        <taxon>Eutheria</taxon>
        <taxon>Euarchontoglires</taxon>
        <taxon>Glires</taxon>
        <taxon>Rodentia</taxon>
        <taxon>Myomorpha</taxon>
        <taxon>Muroidea</taxon>
        <taxon>Muridae</taxon>
        <taxon>Murinae</taxon>
        <taxon>Rattus</taxon>
    </lineage>
</organism>
<proteinExistence type="evidence at transcript level"/>
<accession>D3ZF18</accession>
<protein>
    <recommendedName>
        <fullName evidence="3">Uncharacterized protein C11orf97 homolog</fullName>
    </recommendedName>
</protein>
<name>CK097_RAT</name>
<reference key="1">
    <citation type="journal article" date="2004" name="Am. J. Respir. Cell Mol. Biol.">
        <title>Gene expression analysis in response to lung toxicants: I. Sequencing and microarray development.</title>
        <authorList>
            <person name="Shultz M.A."/>
            <person name="Zhang L."/>
            <person name="Gu Y.-Z."/>
            <person name="Baker G.L."/>
            <person name="Fannuchi M.V."/>
            <person name="Padua A.M."/>
            <person name="Gurske W.A."/>
            <person name="Morin D."/>
            <person name="Penn S.G."/>
            <person name="Jovanovich S.B."/>
            <person name="Plopper C.G."/>
            <person name="Buckpitt A.R."/>
        </authorList>
    </citation>
    <scope>NUCLEOTIDE SEQUENCE [LARGE SCALE MRNA]</scope>
</reference>
<reference key="2">
    <citation type="journal article" date="2004" name="Nature">
        <title>Genome sequence of the Brown Norway rat yields insights into mammalian evolution.</title>
        <authorList>
            <person name="Gibbs R.A."/>
            <person name="Weinstock G.M."/>
            <person name="Metzker M.L."/>
            <person name="Muzny D.M."/>
            <person name="Sodergren E.J."/>
            <person name="Scherer S."/>
            <person name="Scott G."/>
            <person name="Steffen D."/>
            <person name="Worley K.C."/>
            <person name="Burch P.E."/>
            <person name="Okwuonu G."/>
            <person name="Hines S."/>
            <person name="Lewis L."/>
            <person name="Deramo C."/>
            <person name="Delgado O."/>
            <person name="Dugan-Rocha S."/>
            <person name="Miner G."/>
            <person name="Morgan M."/>
            <person name="Hawes A."/>
            <person name="Gill R."/>
            <person name="Holt R.A."/>
            <person name="Adams M.D."/>
            <person name="Amanatides P.G."/>
            <person name="Baden-Tillson H."/>
            <person name="Barnstead M."/>
            <person name="Chin S."/>
            <person name="Evans C.A."/>
            <person name="Ferriera S."/>
            <person name="Fosler C."/>
            <person name="Glodek A."/>
            <person name="Gu Z."/>
            <person name="Jennings D."/>
            <person name="Kraft C.L."/>
            <person name="Nguyen T."/>
            <person name="Pfannkoch C.M."/>
            <person name="Sitter C."/>
            <person name="Sutton G.G."/>
            <person name="Venter J.C."/>
            <person name="Woodage T."/>
            <person name="Smith D."/>
            <person name="Lee H.-M."/>
            <person name="Gustafson E."/>
            <person name="Cahill P."/>
            <person name="Kana A."/>
            <person name="Doucette-Stamm L."/>
            <person name="Weinstock K."/>
            <person name="Fechtel K."/>
            <person name="Weiss R.B."/>
            <person name="Dunn D.M."/>
            <person name="Green E.D."/>
            <person name="Blakesley R.W."/>
            <person name="Bouffard G.G."/>
            <person name="De Jong P.J."/>
            <person name="Osoegawa K."/>
            <person name="Zhu B."/>
            <person name="Marra M."/>
            <person name="Schein J."/>
            <person name="Bosdet I."/>
            <person name="Fjell C."/>
            <person name="Jones S."/>
            <person name="Krzywinski M."/>
            <person name="Mathewson C."/>
            <person name="Siddiqui A."/>
            <person name="Wye N."/>
            <person name="McPherson J."/>
            <person name="Zhao S."/>
            <person name="Fraser C.M."/>
            <person name="Shetty J."/>
            <person name="Shatsman S."/>
            <person name="Geer K."/>
            <person name="Chen Y."/>
            <person name="Abramzon S."/>
            <person name="Nierman W.C."/>
            <person name="Havlak P.H."/>
            <person name="Chen R."/>
            <person name="Durbin K.J."/>
            <person name="Egan A."/>
            <person name="Ren Y."/>
            <person name="Song X.-Z."/>
            <person name="Li B."/>
            <person name="Liu Y."/>
            <person name="Qin X."/>
            <person name="Cawley S."/>
            <person name="Cooney A.J."/>
            <person name="D'Souza L.M."/>
            <person name="Martin K."/>
            <person name="Wu J.Q."/>
            <person name="Gonzalez-Garay M.L."/>
            <person name="Jackson A.R."/>
            <person name="Kalafus K.J."/>
            <person name="McLeod M.P."/>
            <person name="Milosavljevic A."/>
            <person name="Virk D."/>
            <person name="Volkov A."/>
            <person name="Wheeler D.A."/>
            <person name="Zhang Z."/>
            <person name="Bailey J.A."/>
            <person name="Eichler E.E."/>
            <person name="Tuzun E."/>
            <person name="Birney E."/>
            <person name="Mongin E."/>
            <person name="Ureta-Vidal A."/>
            <person name="Woodwark C."/>
            <person name="Zdobnov E."/>
            <person name="Bork P."/>
            <person name="Suyama M."/>
            <person name="Torrents D."/>
            <person name="Alexandersson M."/>
            <person name="Trask B.J."/>
            <person name="Young J.M."/>
            <person name="Huang H."/>
            <person name="Wang H."/>
            <person name="Xing H."/>
            <person name="Daniels S."/>
            <person name="Gietzen D."/>
            <person name="Schmidt J."/>
            <person name="Stevens K."/>
            <person name="Vitt U."/>
            <person name="Wingrove J."/>
            <person name="Camara F."/>
            <person name="Mar Alba M."/>
            <person name="Abril J.F."/>
            <person name="Guigo R."/>
            <person name="Smit A."/>
            <person name="Dubchak I."/>
            <person name="Rubin E.M."/>
            <person name="Couronne O."/>
            <person name="Poliakov A."/>
            <person name="Huebner N."/>
            <person name="Ganten D."/>
            <person name="Goesele C."/>
            <person name="Hummel O."/>
            <person name="Kreitler T."/>
            <person name="Lee Y.-A."/>
            <person name="Monti J."/>
            <person name="Schulz H."/>
            <person name="Zimdahl H."/>
            <person name="Himmelbauer H."/>
            <person name="Lehrach H."/>
            <person name="Jacob H.J."/>
            <person name="Bromberg S."/>
            <person name="Gullings-Handley J."/>
            <person name="Jensen-Seaman M.I."/>
            <person name="Kwitek A.E."/>
            <person name="Lazar J."/>
            <person name="Pasko D."/>
            <person name="Tonellato P.J."/>
            <person name="Twigger S."/>
            <person name="Ponting C.P."/>
            <person name="Duarte J.M."/>
            <person name="Rice S."/>
            <person name="Goodstadt L."/>
            <person name="Beatson S.A."/>
            <person name="Emes R.D."/>
            <person name="Winter E.E."/>
            <person name="Webber C."/>
            <person name="Brandt P."/>
            <person name="Nyakatura G."/>
            <person name="Adetobi M."/>
            <person name="Chiaromonte F."/>
            <person name="Elnitski L."/>
            <person name="Eswara P."/>
            <person name="Hardison R.C."/>
            <person name="Hou M."/>
            <person name="Kolbe D."/>
            <person name="Makova K."/>
            <person name="Miller W."/>
            <person name="Nekrutenko A."/>
            <person name="Riemer C."/>
            <person name="Schwartz S."/>
            <person name="Taylor J."/>
            <person name="Yang S."/>
            <person name="Zhang Y."/>
            <person name="Lindpaintner K."/>
            <person name="Andrews T.D."/>
            <person name="Caccamo M."/>
            <person name="Clamp M."/>
            <person name="Clarke L."/>
            <person name="Curwen V."/>
            <person name="Durbin R.M."/>
            <person name="Eyras E."/>
            <person name="Searle S.M."/>
            <person name="Cooper G.M."/>
            <person name="Batzoglou S."/>
            <person name="Brudno M."/>
            <person name="Sidow A."/>
            <person name="Stone E.A."/>
            <person name="Payseur B.A."/>
            <person name="Bourque G."/>
            <person name="Lopez-Otin C."/>
            <person name="Puente X.S."/>
            <person name="Chakrabarti K."/>
            <person name="Chatterji S."/>
            <person name="Dewey C."/>
            <person name="Pachter L."/>
            <person name="Bray N."/>
            <person name="Yap V.B."/>
            <person name="Caspi A."/>
            <person name="Tesler G."/>
            <person name="Pevzner P.A."/>
            <person name="Haussler D."/>
            <person name="Roskin K.M."/>
            <person name="Baertsch R."/>
            <person name="Clawson H."/>
            <person name="Furey T.S."/>
            <person name="Hinrichs A.S."/>
            <person name="Karolchik D."/>
            <person name="Kent W.J."/>
            <person name="Rosenbloom K.R."/>
            <person name="Trumbower H."/>
            <person name="Weirauch M."/>
            <person name="Cooper D.N."/>
            <person name="Stenson P.D."/>
            <person name="Ma B."/>
            <person name="Brent M."/>
            <person name="Arumugam M."/>
            <person name="Shteynberg D."/>
            <person name="Copley R.R."/>
            <person name="Taylor M.S."/>
            <person name="Riethman H."/>
            <person name="Mudunuri U."/>
            <person name="Peterson J."/>
            <person name="Guyer M."/>
            <person name="Felsenfeld A."/>
            <person name="Old S."/>
            <person name="Mockrin S."/>
            <person name="Collins F.S."/>
        </authorList>
    </citation>
    <scope>NUCLEOTIDE SEQUENCE [LARGE SCALE GENOMIC DNA]</scope>
    <source>
        <strain>Brown Norway</strain>
    </source>
</reference>
<reference key="3">
    <citation type="submission" date="2005-09" db="EMBL/GenBank/DDBJ databases">
        <authorList>
            <person name="Mural R.J."/>
            <person name="Adams M.D."/>
            <person name="Myers E.W."/>
            <person name="Smith H.O."/>
            <person name="Venter J.C."/>
        </authorList>
    </citation>
    <scope>NUCLEOTIDE SEQUENCE [LARGE SCALE GENOMIC DNA]</scope>
</reference>
<evidence type="ECO:0000250" key="1">
    <source>
        <dbReference type="UniProtKB" id="Q9DAE7"/>
    </source>
</evidence>
<evidence type="ECO:0000256" key="2">
    <source>
        <dbReference type="SAM" id="MobiDB-lite"/>
    </source>
</evidence>
<evidence type="ECO:0000305" key="3"/>
<keyword id="KW-0966">Cell projection</keyword>
<keyword id="KW-0963">Cytoplasm</keyword>
<keyword id="KW-0206">Cytoskeleton</keyword>
<keyword id="KW-1185">Reference proteome</keyword>